<reference key="1">
    <citation type="submission" date="2007-06" db="EMBL/GenBank/DDBJ databases">
        <title>Complete sequence of Marinomonas sp. MWYL1.</title>
        <authorList>
            <consortium name="US DOE Joint Genome Institute"/>
            <person name="Copeland A."/>
            <person name="Lucas S."/>
            <person name="Lapidus A."/>
            <person name="Barry K."/>
            <person name="Glavina del Rio T."/>
            <person name="Dalin E."/>
            <person name="Tice H."/>
            <person name="Pitluck S."/>
            <person name="Kiss H."/>
            <person name="Brettin T."/>
            <person name="Bruce D."/>
            <person name="Detter J.C."/>
            <person name="Han C."/>
            <person name="Schmutz J."/>
            <person name="Larimer F."/>
            <person name="Land M."/>
            <person name="Hauser L."/>
            <person name="Kyrpides N."/>
            <person name="Kim E."/>
            <person name="Johnston A.W.B."/>
            <person name="Todd J.D."/>
            <person name="Rogers R."/>
            <person name="Wexler M."/>
            <person name="Bond P.L."/>
            <person name="Li Y."/>
            <person name="Richardson P."/>
        </authorList>
    </citation>
    <scope>NUCLEOTIDE SEQUENCE [LARGE SCALE GENOMIC DNA]</scope>
    <source>
        <strain>MWYL1</strain>
    </source>
</reference>
<protein>
    <recommendedName>
        <fullName evidence="1">Glutamate 5-kinase</fullName>
        <ecNumber evidence="1">2.7.2.11</ecNumber>
    </recommendedName>
    <alternativeName>
        <fullName evidence="1">Gamma-glutamyl kinase</fullName>
        <shortName evidence="1">GK</shortName>
    </alternativeName>
</protein>
<accession>A6W351</accession>
<keyword id="KW-0028">Amino-acid biosynthesis</keyword>
<keyword id="KW-0067">ATP-binding</keyword>
<keyword id="KW-0963">Cytoplasm</keyword>
<keyword id="KW-0418">Kinase</keyword>
<keyword id="KW-0547">Nucleotide-binding</keyword>
<keyword id="KW-0641">Proline biosynthesis</keyword>
<keyword id="KW-0808">Transferase</keyword>
<proteinExistence type="inferred from homology"/>
<name>PROB_MARMS</name>
<comment type="function">
    <text evidence="1">Catalyzes the transfer of a phosphate group to glutamate to form L-glutamate 5-phosphate.</text>
</comment>
<comment type="catalytic activity">
    <reaction evidence="1">
        <text>L-glutamate + ATP = L-glutamyl 5-phosphate + ADP</text>
        <dbReference type="Rhea" id="RHEA:14877"/>
        <dbReference type="ChEBI" id="CHEBI:29985"/>
        <dbReference type="ChEBI" id="CHEBI:30616"/>
        <dbReference type="ChEBI" id="CHEBI:58274"/>
        <dbReference type="ChEBI" id="CHEBI:456216"/>
        <dbReference type="EC" id="2.7.2.11"/>
    </reaction>
</comment>
<comment type="pathway">
    <text evidence="1">Amino-acid biosynthesis; L-proline biosynthesis; L-glutamate 5-semialdehyde from L-glutamate: step 1/2.</text>
</comment>
<comment type="subcellular location">
    <subcellularLocation>
        <location evidence="1">Cytoplasm</location>
    </subcellularLocation>
</comment>
<comment type="similarity">
    <text evidence="1">Belongs to the glutamate 5-kinase family.</text>
</comment>
<dbReference type="EC" id="2.7.2.11" evidence="1"/>
<dbReference type="EMBL" id="CP000749">
    <property type="protein sequence ID" value="ABR73130.1"/>
    <property type="molecule type" value="Genomic_DNA"/>
</dbReference>
<dbReference type="SMR" id="A6W351"/>
<dbReference type="STRING" id="400668.Mmwyl1_4235"/>
<dbReference type="KEGG" id="mmw:Mmwyl1_4235"/>
<dbReference type="eggNOG" id="COG0263">
    <property type="taxonomic scope" value="Bacteria"/>
</dbReference>
<dbReference type="HOGENOM" id="CLU_025400_2_0_6"/>
<dbReference type="OrthoDB" id="9804434at2"/>
<dbReference type="UniPathway" id="UPA00098">
    <property type="reaction ID" value="UER00359"/>
</dbReference>
<dbReference type="GO" id="GO:0005829">
    <property type="term" value="C:cytosol"/>
    <property type="evidence" value="ECO:0007669"/>
    <property type="project" value="TreeGrafter"/>
</dbReference>
<dbReference type="GO" id="GO:0005524">
    <property type="term" value="F:ATP binding"/>
    <property type="evidence" value="ECO:0007669"/>
    <property type="project" value="UniProtKB-KW"/>
</dbReference>
<dbReference type="GO" id="GO:0004349">
    <property type="term" value="F:glutamate 5-kinase activity"/>
    <property type="evidence" value="ECO:0007669"/>
    <property type="project" value="UniProtKB-UniRule"/>
</dbReference>
<dbReference type="GO" id="GO:0003723">
    <property type="term" value="F:RNA binding"/>
    <property type="evidence" value="ECO:0007669"/>
    <property type="project" value="InterPro"/>
</dbReference>
<dbReference type="GO" id="GO:0055129">
    <property type="term" value="P:L-proline biosynthetic process"/>
    <property type="evidence" value="ECO:0007669"/>
    <property type="project" value="UniProtKB-UniRule"/>
</dbReference>
<dbReference type="CDD" id="cd04242">
    <property type="entry name" value="AAK_G5K_ProB"/>
    <property type="match status" value="1"/>
</dbReference>
<dbReference type="CDD" id="cd21157">
    <property type="entry name" value="PUA_G5K"/>
    <property type="match status" value="1"/>
</dbReference>
<dbReference type="FunFam" id="3.40.1160.10:FF:000018">
    <property type="entry name" value="Glutamate 5-kinase"/>
    <property type="match status" value="1"/>
</dbReference>
<dbReference type="Gene3D" id="3.40.1160.10">
    <property type="entry name" value="Acetylglutamate kinase-like"/>
    <property type="match status" value="1"/>
</dbReference>
<dbReference type="Gene3D" id="2.30.130.10">
    <property type="entry name" value="PUA domain"/>
    <property type="match status" value="1"/>
</dbReference>
<dbReference type="HAMAP" id="MF_00456">
    <property type="entry name" value="ProB"/>
    <property type="match status" value="1"/>
</dbReference>
<dbReference type="InterPro" id="IPR036393">
    <property type="entry name" value="AceGlu_kinase-like_sf"/>
</dbReference>
<dbReference type="InterPro" id="IPR001048">
    <property type="entry name" value="Asp/Glu/Uridylate_kinase"/>
</dbReference>
<dbReference type="InterPro" id="IPR041739">
    <property type="entry name" value="G5K_ProB"/>
</dbReference>
<dbReference type="InterPro" id="IPR001057">
    <property type="entry name" value="Glu/AcGlu_kinase"/>
</dbReference>
<dbReference type="InterPro" id="IPR011529">
    <property type="entry name" value="Glu_5kinase"/>
</dbReference>
<dbReference type="InterPro" id="IPR005715">
    <property type="entry name" value="Glu_5kinase/COase_Synthase"/>
</dbReference>
<dbReference type="InterPro" id="IPR019797">
    <property type="entry name" value="Glutamate_5-kinase_CS"/>
</dbReference>
<dbReference type="InterPro" id="IPR002478">
    <property type="entry name" value="PUA"/>
</dbReference>
<dbReference type="InterPro" id="IPR015947">
    <property type="entry name" value="PUA-like_sf"/>
</dbReference>
<dbReference type="InterPro" id="IPR036974">
    <property type="entry name" value="PUA_sf"/>
</dbReference>
<dbReference type="NCBIfam" id="TIGR01027">
    <property type="entry name" value="proB"/>
    <property type="match status" value="1"/>
</dbReference>
<dbReference type="PANTHER" id="PTHR43654">
    <property type="entry name" value="GLUTAMATE 5-KINASE"/>
    <property type="match status" value="1"/>
</dbReference>
<dbReference type="PANTHER" id="PTHR43654:SF1">
    <property type="entry name" value="ISOPENTENYL PHOSPHATE KINASE"/>
    <property type="match status" value="1"/>
</dbReference>
<dbReference type="Pfam" id="PF00696">
    <property type="entry name" value="AA_kinase"/>
    <property type="match status" value="1"/>
</dbReference>
<dbReference type="Pfam" id="PF01472">
    <property type="entry name" value="PUA"/>
    <property type="match status" value="1"/>
</dbReference>
<dbReference type="PIRSF" id="PIRSF000729">
    <property type="entry name" value="GK"/>
    <property type="match status" value="1"/>
</dbReference>
<dbReference type="PRINTS" id="PR00474">
    <property type="entry name" value="GLU5KINASE"/>
</dbReference>
<dbReference type="SMART" id="SM00359">
    <property type="entry name" value="PUA"/>
    <property type="match status" value="1"/>
</dbReference>
<dbReference type="SUPFAM" id="SSF53633">
    <property type="entry name" value="Carbamate kinase-like"/>
    <property type="match status" value="1"/>
</dbReference>
<dbReference type="SUPFAM" id="SSF88697">
    <property type="entry name" value="PUA domain-like"/>
    <property type="match status" value="1"/>
</dbReference>
<dbReference type="PROSITE" id="PS00902">
    <property type="entry name" value="GLUTAMATE_5_KINASE"/>
    <property type="match status" value="1"/>
</dbReference>
<dbReference type="PROSITE" id="PS50890">
    <property type="entry name" value="PUA"/>
    <property type="match status" value="1"/>
</dbReference>
<feature type="chain" id="PRO_1000125243" description="Glutamate 5-kinase">
    <location>
        <begin position="1"/>
        <end position="374"/>
    </location>
</feature>
<feature type="domain" description="PUA" evidence="1">
    <location>
        <begin position="282"/>
        <end position="360"/>
    </location>
</feature>
<feature type="binding site" evidence="1">
    <location>
        <position position="16"/>
    </location>
    <ligand>
        <name>ATP</name>
        <dbReference type="ChEBI" id="CHEBI:30616"/>
    </ligand>
</feature>
<feature type="binding site" evidence="1">
    <location>
        <position position="56"/>
    </location>
    <ligand>
        <name>substrate</name>
    </ligand>
</feature>
<feature type="binding site" evidence="1">
    <location>
        <position position="143"/>
    </location>
    <ligand>
        <name>substrate</name>
    </ligand>
</feature>
<feature type="binding site" evidence="1">
    <location>
        <position position="155"/>
    </location>
    <ligand>
        <name>substrate</name>
    </ligand>
</feature>
<feature type="binding site" evidence="1">
    <location>
        <begin position="175"/>
        <end position="176"/>
    </location>
    <ligand>
        <name>ATP</name>
        <dbReference type="ChEBI" id="CHEBI:30616"/>
    </ligand>
</feature>
<feature type="binding site" evidence="1">
    <location>
        <begin position="217"/>
        <end position="223"/>
    </location>
    <ligand>
        <name>ATP</name>
        <dbReference type="ChEBI" id="CHEBI:30616"/>
    </ligand>
</feature>
<sequence>MEMREKIAKAQRVVVKIGSALLTNDGQGLDVARIGLWVAQIAELRAQGKEVVLVSSGSIAAGMKRLGFSSRPTQVNELQAAAAVGQMELVGVYESHFEKHGLCTAQILLTHDDLSNRRRYLNARSSLRTLLGFGVVPIINENDTVVTDEIRFGDNDTLGALVANLVEADLLIILTDQQGLFDKNPRDHQDATLISHISASDNRLESMASGGAGVLGSGGMLTKVRAALLAARSGADTLIASGREENVIVRVASGEMMGTWLQPEHGRVAARKQWLAGHLKSRGALILDDGAVKALRKEGTSLLAVGVKDAQGTFSRGDMVVCVDLQGGLVARGLVNYSVAETLKLLGQPSSNIGAILGYKGEPELIHRDDLVII</sequence>
<evidence type="ECO:0000255" key="1">
    <source>
        <dbReference type="HAMAP-Rule" id="MF_00456"/>
    </source>
</evidence>
<organism>
    <name type="scientific">Marinomonas sp. (strain MWYL1)</name>
    <dbReference type="NCBI Taxonomy" id="400668"/>
    <lineage>
        <taxon>Bacteria</taxon>
        <taxon>Pseudomonadati</taxon>
        <taxon>Pseudomonadota</taxon>
        <taxon>Gammaproteobacteria</taxon>
        <taxon>Oceanospirillales</taxon>
        <taxon>Oceanospirillaceae</taxon>
        <taxon>Marinomonas</taxon>
    </lineage>
</organism>
<gene>
    <name evidence="1" type="primary">proB</name>
    <name type="ordered locus">Mmwyl1_4235</name>
</gene>